<proteinExistence type="inferred from homology"/>
<organism>
    <name type="scientific">Clostridium botulinum (strain Eklund 17B / Type B)</name>
    <dbReference type="NCBI Taxonomy" id="935198"/>
    <lineage>
        <taxon>Bacteria</taxon>
        <taxon>Bacillati</taxon>
        <taxon>Bacillota</taxon>
        <taxon>Clostridia</taxon>
        <taxon>Eubacteriales</taxon>
        <taxon>Clostridiaceae</taxon>
        <taxon>Clostridium</taxon>
    </lineage>
</organism>
<keyword id="KW-0687">Ribonucleoprotein</keyword>
<keyword id="KW-0689">Ribosomal protein</keyword>
<keyword id="KW-0694">RNA-binding</keyword>
<keyword id="KW-0699">rRNA-binding</keyword>
<protein>
    <recommendedName>
        <fullName evidence="1">Large ribosomal subunit protein bL9</fullName>
    </recommendedName>
    <alternativeName>
        <fullName evidence="2">50S ribosomal protein L9</fullName>
    </alternativeName>
</protein>
<feature type="chain" id="PRO_1000126891" description="Large ribosomal subunit protein bL9">
    <location>
        <begin position="1"/>
        <end position="147"/>
    </location>
</feature>
<comment type="function">
    <text evidence="1">Binds to the 23S rRNA.</text>
</comment>
<comment type="similarity">
    <text evidence="1">Belongs to the bacterial ribosomal protein bL9 family.</text>
</comment>
<reference key="1">
    <citation type="submission" date="2008-04" db="EMBL/GenBank/DDBJ databases">
        <title>Complete sequence of Clostridium botulinum strain Eklund.</title>
        <authorList>
            <person name="Brinkac L.M."/>
            <person name="Brown J.L."/>
            <person name="Bruce D."/>
            <person name="Detter C."/>
            <person name="Munk C."/>
            <person name="Smith L.A."/>
            <person name="Smith T.J."/>
            <person name="Sutton G."/>
            <person name="Brettin T.S."/>
        </authorList>
    </citation>
    <scope>NUCLEOTIDE SEQUENCE [LARGE SCALE GENOMIC DNA]</scope>
    <source>
        <strain>Eklund 17B / Type B</strain>
    </source>
</reference>
<dbReference type="EMBL" id="CP001056">
    <property type="protein sequence ID" value="ACD24301.1"/>
    <property type="molecule type" value="Genomic_DNA"/>
</dbReference>
<dbReference type="SMR" id="B2TRG2"/>
<dbReference type="KEGG" id="cbk:CLL_A3582"/>
<dbReference type="PATRIC" id="fig|935198.13.peg.3504"/>
<dbReference type="HOGENOM" id="CLU_078938_3_0_9"/>
<dbReference type="Proteomes" id="UP000001195">
    <property type="component" value="Chromosome"/>
</dbReference>
<dbReference type="GO" id="GO:1990904">
    <property type="term" value="C:ribonucleoprotein complex"/>
    <property type="evidence" value="ECO:0007669"/>
    <property type="project" value="UniProtKB-KW"/>
</dbReference>
<dbReference type="GO" id="GO:0005840">
    <property type="term" value="C:ribosome"/>
    <property type="evidence" value="ECO:0007669"/>
    <property type="project" value="UniProtKB-KW"/>
</dbReference>
<dbReference type="GO" id="GO:0019843">
    <property type="term" value="F:rRNA binding"/>
    <property type="evidence" value="ECO:0007669"/>
    <property type="project" value="UniProtKB-UniRule"/>
</dbReference>
<dbReference type="GO" id="GO:0003735">
    <property type="term" value="F:structural constituent of ribosome"/>
    <property type="evidence" value="ECO:0007669"/>
    <property type="project" value="InterPro"/>
</dbReference>
<dbReference type="GO" id="GO:0006412">
    <property type="term" value="P:translation"/>
    <property type="evidence" value="ECO:0007669"/>
    <property type="project" value="UniProtKB-UniRule"/>
</dbReference>
<dbReference type="FunFam" id="3.40.5.10:FF:000002">
    <property type="entry name" value="50S ribosomal protein L9"/>
    <property type="match status" value="1"/>
</dbReference>
<dbReference type="Gene3D" id="3.10.430.100">
    <property type="entry name" value="Ribosomal protein L9, C-terminal domain"/>
    <property type="match status" value="1"/>
</dbReference>
<dbReference type="Gene3D" id="3.40.5.10">
    <property type="entry name" value="Ribosomal protein L9, N-terminal domain"/>
    <property type="match status" value="1"/>
</dbReference>
<dbReference type="HAMAP" id="MF_00503">
    <property type="entry name" value="Ribosomal_bL9"/>
    <property type="match status" value="1"/>
</dbReference>
<dbReference type="InterPro" id="IPR000244">
    <property type="entry name" value="Ribosomal_bL9"/>
</dbReference>
<dbReference type="InterPro" id="IPR009027">
    <property type="entry name" value="Ribosomal_bL9/RNase_H1_N"/>
</dbReference>
<dbReference type="InterPro" id="IPR020594">
    <property type="entry name" value="Ribosomal_bL9_bac/chp"/>
</dbReference>
<dbReference type="InterPro" id="IPR020069">
    <property type="entry name" value="Ribosomal_bL9_C"/>
</dbReference>
<dbReference type="InterPro" id="IPR036791">
    <property type="entry name" value="Ribosomal_bL9_C_sf"/>
</dbReference>
<dbReference type="InterPro" id="IPR020070">
    <property type="entry name" value="Ribosomal_bL9_N"/>
</dbReference>
<dbReference type="InterPro" id="IPR036935">
    <property type="entry name" value="Ribosomal_bL9_N_sf"/>
</dbReference>
<dbReference type="NCBIfam" id="TIGR00158">
    <property type="entry name" value="L9"/>
    <property type="match status" value="1"/>
</dbReference>
<dbReference type="PANTHER" id="PTHR21368">
    <property type="entry name" value="50S RIBOSOMAL PROTEIN L9"/>
    <property type="match status" value="1"/>
</dbReference>
<dbReference type="Pfam" id="PF03948">
    <property type="entry name" value="Ribosomal_L9_C"/>
    <property type="match status" value="1"/>
</dbReference>
<dbReference type="Pfam" id="PF01281">
    <property type="entry name" value="Ribosomal_L9_N"/>
    <property type="match status" value="1"/>
</dbReference>
<dbReference type="SUPFAM" id="SSF55658">
    <property type="entry name" value="L9 N-domain-like"/>
    <property type="match status" value="1"/>
</dbReference>
<dbReference type="SUPFAM" id="SSF55653">
    <property type="entry name" value="Ribosomal protein L9 C-domain"/>
    <property type="match status" value="1"/>
</dbReference>
<dbReference type="PROSITE" id="PS00651">
    <property type="entry name" value="RIBOSOMAL_L9"/>
    <property type="match status" value="1"/>
</dbReference>
<evidence type="ECO:0000255" key="1">
    <source>
        <dbReference type="HAMAP-Rule" id="MF_00503"/>
    </source>
</evidence>
<evidence type="ECO:0000305" key="2"/>
<gene>
    <name evidence="1" type="primary">rplI</name>
    <name type="ordered locus">CLL_A3582</name>
</gene>
<name>RL9_CLOBB</name>
<accession>B2TRG2</accession>
<sequence>MKVILLQDVKKIGKKGEVIEASDGYARNFLFPRKLAQEATDSNMHILNNKKENERKKKLAEIEAAQKLAGELKGKEITIKTKIGESGKLFGAITSKDIASLIKTQYNVEIDKKKIVMDTIKLAGNYDIEVKLYPEVSTKMKVNILPQ</sequence>